<gene>
    <name evidence="1" type="primary">dnaK</name>
    <name type="ordered locus">Mbur_1312</name>
</gene>
<dbReference type="EMBL" id="CP000300">
    <property type="protein sequence ID" value="ABE52230.1"/>
    <property type="molecule type" value="Genomic_DNA"/>
</dbReference>
<dbReference type="RefSeq" id="WP_011499375.1">
    <property type="nucleotide sequence ID" value="NC_007955.1"/>
</dbReference>
<dbReference type="SMR" id="Q12WE6"/>
<dbReference type="STRING" id="259564.Mbur_1312"/>
<dbReference type="GeneID" id="3998600"/>
<dbReference type="KEGG" id="mbu:Mbur_1312"/>
<dbReference type="HOGENOM" id="CLU_005965_2_4_2"/>
<dbReference type="OrthoDB" id="9944at2157"/>
<dbReference type="Proteomes" id="UP000001979">
    <property type="component" value="Chromosome"/>
</dbReference>
<dbReference type="GO" id="GO:0005524">
    <property type="term" value="F:ATP binding"/>
    <property type="evidence" value="ECO:0007669"/>
    <property type="project" value="UniProtKB-UniRule"/>
</dbReference>
<dbReference type="GO" id="GO:0140662">
    <property type="term" value="F:ATP-dependent protein folding chaperone"/>
    <property type="evidence" value="ECO:0007669"/>
    <property type="project" value="InterPro"/>
</dbReference>
<dbReference type="GO" id="GO:0051082">
    <property type="term" value="F:unfolded protein binding"/>
    <property type="evidence" value="ECO:0007669"/>
    <property type="project" value="InterPro"/>
</dbReference>
<dbReference type="CDD" id="cd10234">
    <property type="entry name" value="ASKHA_NBD_HSP70_DnaK-like"/>
    <property type="match status" value="1"/>
</dbReference>
<dbReference type="FunFam" id="2.60.34.10:FF:000014">
    <property type="entry name" value="Chaperone protein DnaK HSP70"/>
    <property type="match status" value="1"/>
</dbReference>
<dbReference type="FunFam" id="1.20.1270.10:FF:000001">
    <property type="entry name" value="Molecular chaperone DnaK"/>
    <property type="match status" value="1"/>
</dbReference>
<dbReference type="FunFam" id="3.30.420.40:FF:000071">
    <property type="entry name" value="Molecular chaperone DnaK"/>
    <property type="match status" value="1"/>
</dbReference>
<dbReference type="FunFam" id="3.90.640.10:FF:000003">
    <property type="entry name" value="Molecular chaperone DnaK"/>
    <property type="match status" value="1"/>
</dbReference>
<dbReference type="Gene3D" id="1.20.1270.10">
    <property type="match status" value="1"/>
</dbReference>
<dbReference type="Gene3D" id="3.30.420.40">
    <property type="match status" value="2"/>
</dbReference>
<dbReference type="Gene3D" id="3.90.640.10">
    <property type="entry name" value="Actin, Chain A, domain 4"/>
    <property type="match status" value="1"/>
</dbReference>
<dbReference type="Gene3D" id="2.60.34.10">
    <property type="entry name" value="Substrate Binding Domain Of DNAk, Chain A, domain 1"/>
    <property type="match status" value="1"/>
</dbReference>
<dbReference type="HAMAP" id="MF_00332">
    <property type="entry name" value="DnaK"/>
    <property type="match status" value="1"/>
</dbReference>
<dbReference type="InterPro" id="IPR043129">
    <property type="entry name" value="ATPase_NBD"/>
</dbReference>
<dbReference type="InterPro" id="IPR012725">
    <property type="entry name" value="Chaperone_DnaK"/>
</dbReference>
<dbReference type="InterPro" id="IPR018181">
    <property type="entry name" value="Heat_shock_70_CS"/>
</dbReference>
<dbReference type="InterPro" id="IPR029048">
    <property type="entry name" value="HSP70_C_sf"/>
</dbReference>
<dbReference type="InterPro" id="IPR029047">
    <property type="entry name" value="HSP70_peptide-bd_sf"/>
</dbReference>
<dbReference type="InterPro" id="IPR013126">
    <property type="entry name" value="Hsp_70_fam"/>
</dbReference>
<dbReference type="NCBIfam" id="NF001413">
    <property type="entry name" value="PRK00290.1"/>
    <property type="match status" value="1"/>
</dbReference>
<dbReference type="NCBIfam" id="TIGR02350">
    <property type="entry name" value="prok_dnaK"/>
    <property type="match status" value="1"/>
</dbReference>
<dbReference type="PANTHER" id="PTHR19375">
    <property type="entry name" value="HEAT SHOCK PROTEIN 70KDA"/>
    <property type="match status" value="1"/>
</dbReference>
<dbReference type="Pfam" id="PF00012">
    <property type="entry name" value="HSP70"/>
    <property type="match status" value="1"/>
</dbReference>
<dbReference type="PRINTS" id="PR00301">
    <property type="entry name" value="HEATSHOCK70"/>
</dbReference>
<dbReference type="SUPFAM" id="SSF53067">
    <property type="entry name" value="Actin-like ATPase domain"/>
    <property type="match status" value="2"/>
</dbReference>
<dbReference type="SUPFAM" id="SSF100934">
    <property type="entry name" value="Heat shock protein 70kD (HSP70), C-terminal subdomain"/>
    <property type="match status" value="1"/>
</dbReference>
<dbReference type="SUPFAM" id="SSF100920">
    <property type="entry name" value="Heat shock protein 70kD (HSP70), peptide-binding domain"/>
    <property type="match status" value="1"/>
</dbReference>
<dbReference type="PROSITE" id="PS00297">
    <property type="entry name" value="HSP70_1"/>
    <property type="match status" value="1"/>
</dbReference>
<dbReference type="PROSITE" id="PS00329">
    <property type="entry name" value="HSP70_2"/>
    <property type="match status" value="1"/>
</dbReference>
<name>DNAK_METBU</name>
<reference key="1">
    <citation type="journal article" date="2009" name="ISME J.">
        <title>The genome sequence of the psychrophilic archaeon, Methanococcoides burtonii: the role of genome evolution in cold adaptation.</title>
        <authorList>
            <person name="Allen M.A."/>
            <person name="Lauro F.M."/>
            <person name="Williams T.J."/>
            <person name="Burg D."/>
            <person name="Siddiqui K.S."/>
            <person name="De Francisci D."/>
            <person name="Chong K.W."/>
            <person name="Pilak O."/>
            <person name="Chew H.H."/>
            <person name="De Maere M.Z."/>
            <person name="Ting L."/>
            <person name="Katrib M."/>
            <person name="Ng C."/>
            <person name="Sowers K.R."/>
            <person name="Galperin M.Y."/>
            <person name="Anderson I.J."/>
            <person name="Ivanova N."/>
            <person name="Dalin E."/>
            <person name="Martinez M."/>
            <person name="Lapidus A."/>
            <person name="Hauser L."/>
            <person name="Land M."/>
            <person name="Thomas T."/>
            <person name="Cavicchioli R."/>
        </authorList>
    </citation>
    <scope>NUCLEOTIDE SEQUENCE [LARGE SCALE GENOMIC DNA]</scope>
    <source>
        <strain>DSM 6242 / NBRC 107633 / OCM 468 / ACE-M</strain>
    </source>
</reference>
<evidence type="ECO:0000255" key="1">
    <source>
        <dbReference type="HAMAP-Rule" id="MF_00332"/>
    </source>
</evidence>
<evidence type="ECO:0000256" key="2">
    <source>
        <dbReference type="SAM" id="MobiDB-lite"/>
    </source>
</evidence>
<protein>
    <recommendedName>
        <fullName evidence="1">Chaperone protein DnaK</fullName>
    </recommendedName>
    <alternativeName>
        <fullName evidence="1">HSP70</fullName>
    </alternativeName>
    <alternativeName>
        <fullName evidence="1">Heat shock 70 kDa protein</fullName>
    </alternativeName>
    <alternativeName>
        <fullName evidence="1">Heat shock protein 70</fullName>
    </alternativeName>
</protein>
<sequence length="620" mass="66080">MGKILGIDLGTTNSCMAVIEGGKPTVIPNAEGGRTTPSVVGFSKKGDKLVGQVAKRQMIANPGNSVSSIKRHIGEGDYKVNLSGKDYTPQEVSAMILRKLKDDAEAYLGETITQTVITVPAYFNDSQRQATKDAGQIAGLEVLRIINEPTAASLAYGLDKEEGDHKILVYDLGGGTFDVSILELGDGVFEVLSTSGNTHLGGDDFDQRITEFLVEEFKKAEGIDLSNDKAALQRLNDAAEKAKIELSGVASTNVNLPFITADSNGQPKHIDIDITRAQFEKMTEDLVAKTLESMKMALSDAKLTTKDIDRVLLIGGSTRTPAVYNLVKNFIGKDPYKNINPDEAVAVGAAIQAGVLSGEVHDVLLLDVTPLTMGIETLGGVATPLIERNTTIPVKKSQIFSTAADSQPSVEIHILQGERGIASANKTLGRFVLDGIPPAPRGLPQIEVTFDIDSNGILHVNAKDLGTGKEQSISIQKPGGLSDEEIERMVKDAELHAEEDKARKEEVETRNNADSLVNAAENTLKEAGDVATNEQKEQIEAAIADLKTALEGEDLEAIKSKTEALQESVYKVSAAMYEKAQKEASAGAEASEDASGPSSTGSASDDDVVDADYEVVDEDK</sequence>
<feature type="chain" id="PRO_1000059600" description="Chaperone protein DnaK">
    <location>
        <begin position="1"/>
        <end position="620"/>
    </location>
</feature>
<feature type="region of interest" description="Disordered" evidence="2">
    <location>
        <begin position="579"/>
        <end position="620"/>
    </location>
</feature>
<feature type="compositionally biased region" description="Low complexity" evidence="2">
    <location>
        <begin position="583"/>
        <end position="603"/>
    </location>
</feature>
<feature type="compositionally biased region" description="Acidic residues" evidence="2">
    <location>
        <begin position="604"/>
        <end position="620"/>
    </location>
</feature>
<keyword id="KW-0067">ATP-binding</keyword>
<keyword id="KW-0143">Chaperone</keyword>
<keyword id="KW-0547">Nucleotide-binding</keyword>
<comment type="function">
    <text evidence="1">Acts as a chaperone.</text>
</comment>
<comment type="similarity">
    <text evidence="1">Belongs to the heat shock protein 70 family.</text>
</comment>
<organism>
    <name type="scientific">Methanococcoides burtonii (strain DSM 6242 / NBRC 107633 / OCM 468 / ACE-M)</name>
    <dbReference type="NCBI Taxonomy" id="259564"/>
    <lineage>
        <taxon>Archaea</taxon>
        <taxon>Methanobacteriati</taxon>
        <taxon>Methanobacteriota</taxon>
        <taxon>Stenosarchaea group</taxon>
        <taxon>Methanomicrobia</taxon>
        <taxon>Methanosarcinales</taxon>
        <taxon>Methanosarcinaceae</taxon>
        <taxon>Methanococcoides</taxon>
    </lineage>
</organism>
<proteinExistence type="inferred from homology"/>
<accession>Q12WE6</accession>